<keyword id="KW-0012">Acyltransferase</keyword>
<keyword id="KW-0256">Endoplasmic reticulum</keyword>
<keyword id="KW-0444">Lipid biosynthesis</keyword>
<keyword id="KW-0443">Lipid metabolism</keyword>
<keyword id="KW-0472">Membrane</keyword>
<keyword id="KW-0594">Phospholipid biosynthesis</keyword>
<keyword id="KW-1208">Phospholipid metabolism</keyword>
<keyword id="KW-1185">Reference proteome</keyword>
<keyword id="KW-0808">Transferase</keyword>
<keyword id="KW-0812">Transmembrane</keyword>
<keyword id="KW-1133">Transmembrane helix</keyword>
<protein>
    <recommendedName>
        <fullName>Glycerol-3-phosphate O-acyltransferase 1</fullName>
        <shortName>G-3-P acyltransferase 1</shortName>
        <shortName>GPAT 1</shortName>
        <ecNumber evidence="4">2.3.1.15</ecNumber>
    </recommendedName>
    <alternativeName>
        <fullName>Dihydroxyacetone phosphate acyltransferase 1</fullName>
        <shortName>DHAP-AT 1</shortName>
        <ecNumber evidence="4">2.3.1.42</ecNumber>
    </alternativeName>
    <alternativeName>
        <fullName>Glycerol-3-phosphate / dihydroxyacetone phosphate acyltransferase 1</fullName>
    </alternativeName>
    <alternativeName>
        <fullName evidence="11">Suppressor of choline-transport mutants 1</fullName>
    </alternativeName>
</protein>
<name>GPT1_YEAST</name>
<sequence>MPAPKLTEKFASSKSTQKTTNYSSIEAKSVKTSADQAYIYQEPSATKKILYSIATWLLYNIFHCFFREIRGRGSFKVPQQGPVIFVAAPHANQFVDPVILMGEVKKSVNRRVSFLIAESSLKQPPIGFLASFFMAIGVVRPQDNLKPAEGTIRVDPTDYKRVIGHDTHFLTDCMPKGLIGLPKSMGFGEIQSIESDTSLTLRKEFKMAKPEIKTALLTGTTYKYAAKVDQSCVYHRVFEHLAHNNCIGIFPEGGSHDRTNLLPLKAGVAIMALGCMDKHPDVNVKIVPCGMNYFHPHKFRSRAVVEFGDPIEIPKELVAKYHNPETNRDAVKELLDTISKGLQSVTVTCSDYETLMVVQTIRRLYMTQFSTKLPLPLIVEMNRRMVKGYEFYRNDPKIADLTKDIMAYNAALRHYNLPDHLVEEAKVNFAKNLGLVFFRSIGLCILFSLAMPGIIMFSPVFILAKRISQEKARTALSKSTVKIKANDVIATWKILIGMGFAPLLYIFWSVLITYYLRHKPWNKIYVFSGSYISCVIVTYSALIVGDIGMDGFKSLRPLVLSLTSPKGLQKLQKDRRNLAERIIEVVNNFGSELFPDFDSAALREEFDVIDEEEEDRKTSELNRRKMLRKQKIKRQEKDSSSPIISQRDNHDAYEHHNQDSDGVSLVNSDNSLSNIPLFSSTFHRKSESSLASTSVAPSSSSEFEVENEILEEKNGLASKIAQAVLNKRIGENTAREEEEEEEEEEEEEEEEEEGKEGDA</sequence>
<feature type="chain" id="PRO_0000195257" description="Glycerol-3-phosphate O-acyltransferase 1">
    <location>
        <begin position="1"/>
        <end position="759"/>
    </location>
</feature>
<feature type="topological domain" description="Lumenal" evidence="14">
    <location>
        <begin position="1"/>
        <end position="48"/>
    </location>
</feature>
<feature type="transmembrane region" description="Helical" evidence="14">
    <location>
        <begin position="49"/>
        <end position="69"/>
    </location>
</feature>
<feature type="topological domain" description="Cytoplasmic" evidence="14">
    <location>
        <begin position="70"/>
        <end position="434"/>
    </location>
</feature>
<feature type="transmembrane region" description="Helical" evidence="14">
    <location>
        <begin position="435"/>
        <end position="449"/>
    </location>
</feature>
<feature type="topological domain" description="Lumenal" evidence="14">
    <location>
        <position position="450"/>
    </location>
</feature>
<feature type="transmembrane region" description="Helical" evidence="14">
    <location>
        <begin position="451"/>
        <end position="465"/>
    </location>
</feature>
<feature type="topological domain" description="Cytoplasmic" evidence="14">
    <location>
        <begin position="466"/>
        <end position="493"/>
    </location>
</feature>
<feature type="transmembrane region" description="Helical" evidence="14">
    <location>
        <begin position="494"/>
        <end position="514"/>
    </location>
</feature>
<feature type="topological domain" description="Lumenal" evidence="14">
    <location>
        <begin position="515"/>
        <end position="523"/>
    </location>
</feature>
<feature type="transmembrane region" description="Helical" evidence="14">
    <location>
        <begin position="524"/>
        <end position="544"/>
    </location>
</feature>
<feature type="topological domain" description="Cytoplasmic" evidence="14">
    <location>
        <begin position="545"/>
        <end position="759"/>
    </location>
</feature>
<feature type="region of interest" description="Disordered" evidence="3">
    <location>
        <begin position="613"/>
        <end position="667"/>
    </location>
</feature>
<feature type="region of interest" description="Disordered" evidence="3">
    <location>
        <begin position="684"/>
        <end position="705"/>
    </location>
</feature>
<feature type="region of interest" description="Disordered" evidence="3">
    <location>
        <begin position="729"/>
        <end position="759"/>
    </location>
</feature>
<feature type="short sequence motif" description="HXXXXD motif">
    <location>
        <begin position="414"/>
        <end position="419"/>
    </location>
</feature>
<feature type="compositionally biased region" description="Basic and acidic residues" evidence="3">
    <location>
        <begin position="647"/>
        <end position="659"/>
    </location>
</feature>
<feature type="compositionally biased region" description="Low complexity" evidence="3">
    <location>
        <begin position="688"/>
        <end position="702"/>
    </location>
</feature>
<feature type="compositionally biased region" description="Acidic residues" evidence="3">
    <location>
        <begin position="736"/>
        <end position="759"/>
    </location>
</feature>
<feature type="sequence conflict" description="In Ref. 1; BAA07409 and 2; CAC85390." evidence="12" ref="1 2">
    <original>F</original>
    <variation>S</variation>
    <location>
        <position position="10"/>
    </location>
</feature>
<feature type="sequence conflict" description="In Ref. 2; CAC85390." evidence="12" ref="2">
    <location>
        <begin position="30"/>
        <end position="38"/>
    </location>
</feature>
<feature type="sequence conflict" description="In Ref. 1; BAA07409." evidence="12" ref="1">
    <original>A</original>
    <variation>R</variation>
    <location>
        <position position="88"/>
    </location>
</feature>
<feature type="sequence conflict" description="In Ref. 1; BAA07409." evidence="12" ref="1">
    <original>P</original>
    <variation>A</variation>
    <location>
        <position position="125"/>
    </location>
</feature>
<feature type="sequence conflict" description="In Ref. 2; CAC85390." evidence="12" ref="2">
    <original>K</original>
    <variation>R</variation>
    <location>
        <position position="278"/>
    </location>
</feature>
<feature type="sequence conflict" description="In Ref. 2; CAC85390." evidence="12" ref="2">
    <original>P</original>
    <variation>S</variation>
    <location>
        <position position="324"/>
    </location>
</feature>
<feature type="sequence conflict" description="In Ref. 2; CAC85390." evidence="12" ref="2">
    <original>D</original>
    <variation>N</variation>
    <location>
        <position position="574"/>
    </location>
</feature>
<feature type="sequence conflict" description="In Ref. 1; BAA07409." evidence="12" ref="1">
    <original>G</original>
    <variation>S</variation>
    <location>
        <position position="730"/>
    </location>
</feature>
<accession>P32784</accession>
<accession>D6VPY8</accession>
<accession>Q07062</accession>
<accession>Q96TV1</accession>
<proteinExistence type="evidence at protein level"/>
<dbReference type="EC" id="2.3.1.15" evidence="4"/>
<dbReference type="EC" id="2.3.1.42" evidence="4"/>
<dbReference type="EMBL" id="D38256">
    <property type="protein sequence ID" value="BAA07409.1"/>
    <property type="molecule type" value="Genomic_DNA"/>
</dbReference>
<dbReference type="EMBL" id="AJ314608">
    <property type="protein sequence ID" value="CAC85390.1"/>
    <property type="molecule type" value="Genomic_DNA"/>
</dbReference>
<dbReference type="EMBL" id="Z35773">
    <property type="protein sequence ID" value="CAA84831.1"/>
    <property type="molecule type" value="Genomic_DNA"/>
</dbReference>
<dbReference type="EMBL" id="S47695">
    <property type="protein sequence ID" value="AAB23987.1"/>
    <property type="molecule type" value="Genomic_DNA"/>
</dbReference>
<dbReference type="EMBL" id="BK006936">
    <property type="protein sequence ID" value="DAA07108.1"/>
    <property type="molecule type" value="Genomic_DNA"/>
</dbReference>
<dbReference type="PIR" id="S25330">
    <property type="entry name" value="S25330"/>
</dbReference>
<dbReference type="RefSeq" id="NP_009542.1">
    <property type="nucleotide sequence ID" value="NM_001178251.1"/>
</dbReference>
<dbReference type="SMR" id="P32784"/>
<dbReference type="BioGRID" id="32688">
    <property type="interactions" value="208"/>
</dbReference>
<dbReference type="FunCoup" id="P32784">
    <property type="interactions" value="173"/>
</dbReference>
<dbReference type="IntAct" id="P32784">
    <property type="interactions" value="3"/>
</dbReference>
<dbReference type="MINT" id="P32784"/>
<dbReference type="STRING" id="4932.YBL011W"/>
<dbReference type="SwissLipids" id="SLP:000000048"/>
<dbReference type="iPTMnet" id="P32784"/>
<dbReference type="PaxDb" id="4932-YBL011W"/>
<dbReference type="PeptideAtlas" id="P32784"/>
<dbReference type="EnsemblFungi" id="YBL011W_mRNA">
    <property type="protein sequence ID" value="YBL011W"/>
    <property type="gene ID" value="YBL011W"/>
</dbReference>
<dbReference type="GeneID" id="852271"/>
<dbReference type="KEGG" id="sce:YBL011W"/>
<dbReference type="AGR" id="SGD:S000000107"/>
<dbReference type="SGD" id="S000000107">
    <property type="gene designation" value="SCT1"/>
</dbReference>
<dbReference type="VEuPathDB" id="FungiDB:YBL011W"/>
<dbReference type="eggNOG" id="ENOG502QQ2N">
    <property type="taxonomic scope" value="Eukaryota"/>
</dbReference>
<dbReference type="GeneTree" id="ENSGT00940000176524"/>
<dbReference type="HOGENOM" id="CLU_007860_1_0_1"/>
<dbReference type="InParanoid" id="P32784"/>
<dbReference type="OMA" id="IMALGCM"/>
<dbReference type="OrthoDB" id="2427554at2759"/>
<dbReference type="BioCyc" id="MetaCyc:MONOMER3O-4105"/>
<dbReference type="BioCyc" id="YEAST:MONOMER3O-4105"/>
<dbReference type="BRENDA" id="2.3.1.15">
    <property type="organism ID" value="984"/>
</dbReference>
<dbReference type="SABIO-RK" id="P32784"/>
<dbReference type="UniPathway" id="UPA00557">
    <property type="reaction ID" value="UER00612"/>
</dbReference>
<dbReference type="BioGRID-ORCS" id="852271">
    <property type="hits" value="2 hits in 10 CRISPR screens"/>
</dbReference>
<dbReference type="PRO" id="PR:P32784"/>
<dbReference type="Proteomes" id="UP000002311">
    <property type="component" value="Chromosome II"/>
</dbReference>
<dbReference type="RNAct" id="P32784">
    <property type="molecule type" value="protein"/>
</dbReference>
<dbReference type="GO" id="GO:0005783">
    <property type="term" value="C:endoplasmic reticulum"/>
    <property type="evidence" value="ECO:0000314"/>
    <property type="project" value="SGD"/>
</dbReference>
<dbReference type="GO" id="GO:0005789">
    <property type="term" value="C:endoplasmic reticulum membrane"/>
    <property type="evidence" value="ECO:0007669"/>
    <property type="project" value="UniProtKB-SubCell"/>
</dbReference>
<dbReference type="GO" id="GO:0004366">
    <property type="term" value="F:glycerol-3-phosphate O-acyltransferase activity"/>
    <property type="evidence" value="ECO:0000314"/>
    <property type="project" value="SGD"/>
</dbReference>
<dbReference type="GO" id="GO:0016287">
    <property type="term" value="F:glycerone-phosphate O-acyltransferase activity"/>
    <property type="evidence" value="ECO:0000314"/>
    <property type="project" value="SGD"/>
</dbReference>
<dbReference type="GO" id="GO:0016024">
    <property type="term" value="P:CDP-diacylglycerol biosynthetic process"/>
    <property type="evidence" value="ECO:0007669"/>
    <property type="project" value="UniProtKB-UniPathway"/>
</dbReference>
<dbReference type="GO" id="GO:0008654">
    <property type="term" value="P:phospholipid biosynthetic process"/>
    <property type="evidence" value="ECO:0000315"/>
    <property type="project" value="SGD"/>
</dbReference>
<dbReference type="CDD" id="cd07992">
    <property type="entry name" value="LPLAT_AAK14816-like"/>
    <property type="match status" value="1"/>
</dbReference>
<dbReference type="InterPro" id="IPR052744">
    <property type="entry name" value="GPAT/DAPAT"/>
</dbReference>
<dbReference type="InterPro" id="IPR002123">
    <property type="entry name" value="Plipid/glycerol_acylTrfase"/>
</dbReference>
<dbReference type="PANTHER" id="PTHR31605">
    <property type="entry name" value="GLYCEROL-3-PHOSPHATE O-ACYLTRANSFERASE 1"/>
    <property type="match status" value="1"/>
</dbReference>
<dbReference type="PANTHER" id="PTHR31605:SF0">
    <property type="entry name" value="GLYCEROL-3-PHOSPHATE O-ACYLTRANSFERASE 1"/>
    <property type="match status" value="1"/>
</dbReference>
<dbReference type="Pfam" id="PF01553">
    <property type="entry name" value="Acyltransferase"/>
    <property type="match status" value="1"/>
</dbReference>
<dbReference type="SMART" id="SM00563">
    <property type="entry name" value="PlsC"/>
    <property type="match status" value="1"/>
</dbReference>
<dbReference type="SUPFAM" id="SSF69593">
    <property type="entry name" value="Glycerol-3-phosphate (1)-acyltransferase"/>
    <property type="match status" value="1"/>
</dbReference>
<evidence type="ECO:0000250" key="1"/>
<evidence type="ECO:0000255" key="2"/>
<evidence type="ECO:0000256" key="3">
    <source>
        <dbReference type="SAM" id="MobiDB-lite"/>
    </source>
</evidence>
<evidence type="ECO:0000269" key="4">
    <source>
    </source>
</evidence>
<evidence type="ECO:0000269" key="5">
    <source>
    </source>
</evidence>
<evidence type="ECO:0000269" key="6">
    <source>
    </source>
</evidence>
<evidence type="ECO:0000269" key="7">
    <source>
    </source>
</evidence>
<evidence type="ECO:0000269" key="8">
    <source>
    </source>
</evidence>
<evidence type="ECO:0000269" key="9">
    <source>
    </source>
</evidence>
<evidence type="ECO:0000303" key="10">
    <source>
    </source>
</evidence>
<evidence type="ECO:0000303" key="11">
    <source>
    </source>
</evidence>
<evidence type="ECO:0000305" key="12"/>
<evidence type="ECO:0000305" key="13">
    <source>
    </source>
</evidence>
<evidence type="ECO:0000305" key="14">
    <source>
    </source>
</evidence>
<gene>
    <name evidence="11" type="primary">SCT1</name>
    <name evidence="10" type="synonym">GAT2</name>
    <name type="ordered locus">YBL011W</name>
    <name type="ORF">YBL0309</name>
    <name type="ORF">YBL0315</name>
</gene>
<comment type="function">
    <text evidence="4 5 9">Dual substrate-specific glycerol-3-phosphate/dihydroxyacetone phosphate sn-1 acyltransferase, catalyzing the first and committed reaction in the de novo synthesis of glycerophospholipids and triacylglycerols (TAGs). Prefers Gly-3-P over dihydroxyacetone phosphate and has a marked preference for 16-carbon fatty acyl chains. Transfers a fatty acid from fatty acyl-CoA to the sn-1 position of glycerol-3-phosphate to produce lysophosphatidic acid (LysoPA). These lipids not only are precursors of glycerolipids, but also are dynamic components of signal transduction systems that control cell physiology (PubMed:11544256). SCT1 is the primary supplier of diacylglycerols (DAG), used mainly in TAG synthesis and phosphatidylcholine (PC) synthesis through the CDP-choline pathway (PubMed:12167660). Regulates fatty acid desaturation, that is, the ratio of unsaturated versus saturated fatty acyl chains, by competing with the desaturase OLE1 for the common substrate C16:0-CoA. Sequesters C16:0-CoA into lipids, thereby shielding it from desaturation by OLE1 (PubMed:22323296).</text>
</comment>
<comment type="catalytic activity">
    <reaction evidence="4">
        <text>sn-glycerol 3-phosphate + an acyl-CoA = a 1-acyl-sn-glycero-3-phosphate + CoA</text>
        <dbReference type="Rhea" id="RHEA:15325"/>
        <dbReference type="ChEBI" id="CHEBI:57287"/>
        <dbReference type="ChEBI" id="CHEBI:57597"/>
        <dbReference type="ChEBI" id="CHEBI:57970"/>
        <dbReference type="ChEBI" id="CHEBI:58342"/>
        <dbReference type="EC" id="2.3.1.15"/>
    </reaction>
</comment>
<comment type="catalytic activity">
    <reaction evidence="4">
        <text>dihydroxyacetone phosphate + an acyl-CoA = a 1-acylglycerone 3-phosphate + CoA</text>
        <dbReference type="Rhea" id="RHEA:17657"/>
        <dbReference type="ChEBI" id="CHEBI:57287"/>
        <dbReference type="ChEBI" id="CHEBI:57534"/>
        <dbReference type="ChEBI" id="CHEBI:57642"/>
        <dbReference type="ChEBI" id="CHEBI:58342"/>
        <dbReference type="EC" id="2.3.1.42"/>
    </reaction>
</comment>
<comment type="catalytic activity">
    <reaction evidence="4">
        <text>sn-glycerol 3-phosphate + hexadecanoyl-CoA = 1-hexadecanoyl-sn-glycero-3-phosphate + CoA</text>
        <dbReference type="Rhea" id="RHEA:35723"/>
        <dbReference type="ChEBI" id="CHEBI:57287"/>
        <dbReference type="ChEBI" id="CHEBI:57379"/>
        <dbReference type="ChEBI" id="CHEBI:57518"/>
        <dbReference type="ChEBI" id="CHEBI:57597"/>
    </reaction>
    <physiologicalReaction direction="left-to-right" evidence="13">
        <dbReference type="Rhea" id="RHEA:35724"/>
    </physiologicalReaction>
</comment>
<comment type="catalytic activity">
    <reaction evidence="4">
        <text>(9Z)-hexadecenoyl-CoA + sn-glycerol 3-phosphate = 1-(9Z-hexadecenoyl)-sn-glycero-3-phosphate + CoA</text>
        <dbReference type="Rhea" id="RHEA:44188"/>
        <dbReference type="ChEBI" id="CHEBI:57287"/>
        <dbReference type="ChEBI" id="CHEBI:57597"/>
        <dbReference type="ChEBI" id="CHEBI:61540"/>
        <dbReference type="ChEBI" id="CHEBI:74694"/>
    </reaction>
    <physiologicalReaction direction="left-to-right" evidence="13">
        <dbReference type="Rhea" id="RHEA:44189"/>
    </physiologicalReaction>
</comment>
<comment type="catalytic activity">
    <reaction evidence="4">
        <text>sn-glycerol 3-phosphate + octadecanoyl-CoA = 1-octadecanoyl-sn-glycero-3-phosphate + CoA</text>
        <dbReference type="Rhea" id="RHEA:37195"/>
        <dbReference type="ChEBI" id="CHEBI:57287"/>
        <dbReference type="ChEBI" id="CHEBI:57394"/>
        <dbReference type="ChEBI" id="CHEBI:57597"/>
        <dbReference type="ChEBI" id="CHEBI:74565"/>
    </reaction>
    <physiologicalReaction direction="left-to-right" evidence="13">
        <dbReference type="Rhea" id="RHEA:37196"/>
    </physiologicalReaction>
</comment>
<comment type="catalytic activity">
    <reaction evidence="4">
        <text>sn-glycerol 3-phosphate + (9Z)-octadecenoyl-CoA = 1-(9Z-octadecenoyl)-sn-glycero-3-phosphate + CoA</text>
        <dbReference type="Rhea" id="RHEA:37199"/>
        <dbReference type="ChEBI" id="CHEBI:57287"/>
        <dbReference type="ChEBI" id="CHEBI:57387"/>
        <dbReference type="ChEBI" id="CHEBI:57597"/>
        <dbReference type="ChEBI" id="CHEBI:74544"/>
    </reaction>
    <physiologicalReaction direction="left-to-right" evidence="13">
        <dbReference type="Rhea" id="RHEA:37200"/>
    </physiologicalReaction>
</comment>
<comment type="pathway">
    <text evidence="12">Phospholipid metabolism; CDP-diacylglycerol biosynthesis; CDP-diacylglycerol from sn-glycerol 3-phosphate: step 1/3.</text>
</comment>
<comment type="subcellular location">
    <subcellularLocation>
        <location evidence="6 8">Endoplasmic reticulum membrane</location>
        <topology evidence="2">Multi-pass membrane protein</topology>
    </subcellularLocation>
    <text evidence="8">Localizes to both perinuclear and cortical endoplasmic reticulum.</text>
</comment>
<comment type="domain">
    <text evidence="1">The HXXXXD motif is essential for acyltransferase activity and may constitute the binding site for the phosphate moiety of the glycerol-3-phosphate.</text>
</comment>
<comment type="miscellaneous">
    <text evidence="7">Present with 1050 molecules/cell in log phase SD medium.</text>
</comment>
<comment type="similarity">
    <text evidence="12">Belongs to the GPAT/DAPAT family.</text>
</comment>
<reference key="1">
    <citation type="journal article" date="1995" name="J. Biochem.">
        <title>Isolation and characterization of a SCT1 gene which can suppress a choline-transport mutant of Saccharomyces cerevisiae.</title>
        <authorList>
            <person name="Matsushita M."/>
            <person name="Nikawa J."/>
        </authorList>
    </citation>
    <scope>NUCLEOTIDE SEQUENCE [GENOMIC DNA]</scope>
</reference>
<reference key="2">
    <citation type="journal article" date="2001" name="J. Biol. Chem.">
        <title>The initial step of the glycerolipid pathway: identification of glycerol-3-phosphate / dihydroxyacetone phosphate dual substrate acyltransferases in Saccharomyces cerevisiae.</title>
        <authorList>
            <person name="Zheng Z."/>
            <person name="Zou J."/>
        </authorList>
    </citation>
    <scope>NUCLEOTIDE SEQUENCE [GENOMIC DNA]</scope>
    <scope>FUNCTION</scope>
    <scope>CATALYTIC ACTIVITY</scope>
    <source>
        <strain>ATCC 204660 / DBY746</strain>
    </source>
</reference>
<reference key="3">
    <citation type="journal article" date="1992" name="Yeast">
        <title>The sequence of an 8 kb segment on the left arm of chromosome II from Saccharomyces cerevisiae identifies five new open reading frames of unknown functions, two tRNA genes and two transposable elements.</title>
        <authorList>
            <person name="Skala J."/>
            <person name="van Dyck L."/>
            <person name="Purnelle B."/>
            <person name="Goffeau A."/>
        </authorList>
    </citation>
    <scope>NUCLEOTIDE SEQUENCE [GENOMIC DNA]</scope>
    <source>
        <strain>ATCC 204508 / S288c</strain>
    </source>
</reference>
<reference key="4">
    <citation type="journal article" date="1994" name="EMBO J.">
        <title>Complete DNA sequence of yeast chromosome II.</title>
        <authorList>
            <person name="Feldmann H."/>
            <person name="Aigle M."/>
            <person name="Aljinovic G."/>
            <person name="Andre B."/>
            <person name="Baclet M.C."/>
            <person name="Barthe C."/>
            <person name="Baur A."/>
            <person name="Becam A.-M."/>
            <person name="Biteau N."/>
            <person name="Boles E."/>
            <person name="Brandt T."/>
            <person name="Brendel M."/>
            <person name="Brueckner M."/>
            <person name="Bussereau F."/>
            <person name="Christiansen C."/>
            <person name="Contreras R."/>
            <person name="Crouzet M."/>
            <person name="Cziepluch C."/>
            <person name="Demolis N."/>
            <person name="Delaveau T."/>
            <person name="Doignon F."/>
            <person name="Domdey H."/>
            <person name="Duesterhus S."/>
            <person name="Dubois E."/>
            <person name="Dujon B."/>
            <person name="El Bakkoury M."/>
            <person name="Entian K.-D."/>
            <person name="Feuermann M."/>
            <person name="Fiers W."/>
            <person name="Fobo G.M."/>
            <person name="Fritz C."/>
            <person name="Gassenhuber J."/>
            <person name="Glansdorff N."/>
            <person name="Goffeau A."/>
            <person name="Grivell L.A."/>
            <person name="de Haan M."/>
            <person name="Hein C."/>
            <person name="Herbert C.J."/>
            <person name="Hollenberg C.P."/>
            <person name="Holmstroem K."/>
            <person name="Jacq C."/>
            <person name="Jacquet M."/>
            <person name="Jauniaux J.-C."/>
            <person name="Jonniaux J.-L."/>
            <person name="Kallesoee T."/>
            <person name="Kiesau P."/>
            <person name="Kirchrath L."/>
            <person name="Koetter P."/>
            <person name="Korol S."/>
            <person name="Liebl S."/>
            <person name="Logghe M."/>
            <person name="Lohan A.J.E."/>
            <person name="Louis E.J."/>
            <person name="Li Z.Y."/>
            <person name="Maat M.J."/>
            <person name="Mallet L."/>
            <person name="Mannhaupt G."/>
            <person name="Messenguy F."/>
            <person name="Miosga T."/>
            <person name="Molemans F."/>
            <person name="Mueller S."/>
            <person name="Nasr F."/>
            <person name="Obermaier B."/>
            <person name="Perea J."/>
            <person name="Pierard A."/>
            <person name="Piravandi E."/>
            <person name="Pohl F.M."/>
            <person name="Pohl T.M."/>
            <person name="Potier S."/>
            <person name="Proft M."/>
            <person name="Purnelle B."/>
            <person name="Ramezani Rad M."/>
            <person name="Rieger M."/>
            <person name="Rose M."/>
            <person name="Schaaff-Gerstenschlaeger I."/>
            <person name="Scherens B."/>
            <person name="Schwarzlose C."/>
            <person name="Skala J."/>
            <person name="Slonimski P.P."/>
            <person name="Smits P.H.M."/>
            <person name="Souciet J.-L."/>
            <person name="Steensma H.Y."/>
            <person name="Stucka R."/>
            <person name="Urrestarazu L.A."/>
            <person name="van der Aart Q.J.M."/>
            <person name="Van Dyck L."/>
            <person name="Vassarotti A."/>
            <person name="Vetter I."/>
            <person name="Vierendeels F."/>
            <person name="Vissers S."/>
            <person name="Wagner G."/>
            <person name="de Wergifosse P."/>
            <person name="Wolfe K.H."/>
            <person name="Zagulski M."/>
            <person name="Zimmermann F.K."/>
            <person name="Mewes H.-W."/>
            <person name="Kleine K."/>
        </authorList>
    </citation>
    <scope>NUCLEOTIDE SEQUENCE [LARGE SCALE GENOMIC DNA]</scope>
    <source>
        <strain>ATCC 204508 / S288c</strain>
    </source>
</reference>
<reference key="5">
    <citation type="journal article" date="2014" name="G3 (Bethesda)">
        <title>The reference genome sequence of Saccharomyces cerevisiae: Then and now.</title>
        <authorList>
            <person name="Engel S.R."/>
            <person name="Dietrich F.S."/>
            <person name="Fisk D.G."/>
            <person name="Binkley G."/>
            <person name="Balakrishnan R."/>
            <person name="Costanzo M.C."/>
            <person name="Dwight S.S."/>
            <person name="Hitz B.C."/>
            <person name="Karra K."/>
            <person name="Nash R.S."/>
            <person name="Weng S."/>
            <person name="Wong E.D."/>
            <person name="Lloyd P."/>
            <person name="Skrzypek M.S."/>
            <person name="Miyasato S.R."/>
            <person name="Simison M."/>
            <person name="Cherry J.M."/>
        </authorList>
    </citation>
    <scope>GENOME REANNOTATION</scope>
    <source>
        <strain>ATCC 204508 / S288c</strain>
    </source>
</reference>
<reference key="6">
    <citation type="journal article" date="1992" name="Yeast">
        <title>Sequence of a 12.7 kb segment of yeast chromosome II identifies a PDR-like gene and several new open reading frames.</title>
        <authorList>
            <person name="Delaveau T."/>
            <person name="Jacq C."/>
            <person name="Perea J."/>
        </authorList>
    </citation>
    <scope>NUCLEOTIDE SEQUENCE [GENOMIC DNA] OF 609-759</scope>
    <source>
        <strain>ATCC 204508 / S288c</strain>
    </source>
</reference>
<reference key="7">
    <citation type="journal article" date="2002" name="J. Biol. Chem.">
        <title>Differential partitioning of lipids metabolized by separate yeast glycerol-3-phosphate acyltransferases reveals that phospholipase D generation of phosphatidic acid mediates sensitivity to choline-containing lysolipids and drugs.</title>
        <authorList>
            <person name="Zaremberg V."/>
            <person name="McMaster C.R."/>
        </authorList>
    </citation>
    <scope>FUNCTION</scope>
</reference>
<reference key="8">
    <citation type="journal article" date="2003" name="Nature">
        <title>Global analysis of protein localization in budding yeast.</title>
        <authorList>
            <person name="Huh W.-K."/>
            <person name="Falvo J.V."/>
            <person name="Gerke L.C."/>
            <person name="Carroll A.S."/>
            <person name="Howson R.W."/>
            <person name="Weissman J.S."/>
            <person name="O'Shea E.K."/>
        </authorList>
    </citation>
    <scope>SUBCELLULAR LOCATION [LARGE SCALE ANALYSIS]</scope>
</reference>
<reference key="9">
    <citation type="journal article" date="2003" name="Nature">
        <title>Global analysis of protein expression in yeast.</title>
        <authorList>
            <person name="Ghaemmaghami S."/>
            <person name="Huh W.-K."/>
            <person name="Bower K."/>
            <person name="Howson R.W."/>
            <person name="Belle A."/>
            <person name="Dephoure N."/>
            <person name="O'Shea E.K."/>
            <person name="Weissman J.S."/>
        </authorList>
    </citation>
    <scope>LEVEL OF PROTEIN EXPRESSION [LARGE SCALE ANALYSIS]</scope>
</reference>
<reference key="10">
    <citation type="journal article" date="2008" name="Mol. Cell. Proteomics">
        <title>A multidimensional chromatography technology for in-depth phosphoproteome analysis.</title>
        <authorList>
            <person name="Albuquerque C.P."/>
            <person name="Smolka M.B."/>
            <person name="Payne S.H."/>
            <person name="Bafna V."/>
            <person name="Eng J."/>
            <person name="Zhou H."/>
        </authorList>
    </citation>
    <scope>IDENTIFICATION BY MASS SPECTROMETRY [LARGE SCALE ANALYSIS]</scope>
</reference>
<reference key="11">
    <citation type="journal article" date="2009" name="Eukaryot. Cell">
        <title>Glycerol-3-phosphate acyltransferases gat1p and gat2p are microsomal phosphoproteins with differential contributions to polarized cell growth.</title>
        <authorList>
            <person name="Bratschi M.W."/>
            <person name="Burrowes D.P."/>
            <person name="Kulaga A."/>
            <person name="Cheung J.F."/>
            <person name="Alvarez A.L."/>
            <person name="Kearley J."/>
            <person name="Zaremberg V."/>
        </authorList>
    </citation>
    <scope>SUBCELLULAR LOCATION</scope>
</reference>
<reference key="12">
    <citation type="journal article" date="2009" name="Science">
        <title>Global analysis of Cdk1 substrate phosphorylation sites provides insights into evolution.</title>
        <authorList>
            <person name="Holt L.J."/>
            <person name="Tuch B.B."/>
            <person name="Villen J."/>
            <person name="Johnson A.D."/>
            <person name="Gygi S.P."/>
            <person name="Morgan D.O."/>
        </authorList>
    </citation>
    <scope>IDENTIFICATION BY MASS SPECTROMETRY [LARGE SCALE ANALYSIS]</scope>
</reference>
<reference key="13">
    <citation type="journal article" date="2012" name="Mol. Biol. Cell">
        <title>The yeast acyltransferase Sct1p regulates fatty acid desaturation by competing with the desaturase Ole1p.</title>
        <authorList>
            <person name="De Smet C.H."/>
            <person name="Vittone E."/>
            <person name="Scherer M."/>
            <person name="Houweling M."/>
            <person name="Liebisch G."/>
            <person name="Brouwers J.F."/>
            <person name="de Kroon A.I."/>
        </authorList>
    </citation>
    <scope>FUNCTION</scope>
</reference>
<reference key="14">
    <citation type="journal article" date="2017" name="PLoS ONE">
        <title>Chemical crosslinking and mass spectrometry to elucidate the topology of integral membrane proteins.</title>
        <authorList>
            <person name="Debelyy M.O."/>
            <person name="Waridel P."/>
            <person name="Quadroni M."/>
            <person name="Schneiter R."/>
            <person name="Conzelmann A."/>
        </authorList>
    </citation>
    <scope>TOPOLOGY</scope>
</reference>
<organism>
    <name type="scientific">Saccharomyces cerevisiae (strain ATCC 204508 / S288c)</name>
    <name type="common">Baker's yeast</name>
    <dbReference type="NCBI Taxonomy" id="559292"/>
    <lineage>
        <taxon>Eukaryota</taxon>
        <taxon>Fungi</taxon>
        <taxon>Dikarya</taxon>
        <taxon>Ascomycota</taxon>
        <taxon>Saccharomycotina</taxon>
        <taxon>Saccharomycetes</taxon>
        <taxon>Saccharomycetales</taxon>
        <taxon>Saccharomycetaceae</taxon>
        <taxon>Saccharomyces</taxon>
    </lineage>
</organism>